<gene>
    <name evidence="1" type="primary">rpoZ</name>
    <name type="ordered locus">ABC2321</name>
</gene>
<organism>
    <name type="scientific">Shouchella clausii (strain KSM-K16)</name>
    <name type="common">Alkalihalobacillus clausii</name>
    <dbReference type="NCBI Taxonomy" id="66692"/>
    <lineage>
        <taxon>Bacteria</taxon>
        <taxon>Bacillati</taxon>
        <taxon>Bacillota</taxon>
        <taxon>Bacilli</taxon>
        <taxon>Bacillales</taxon>
        <taxon>Bacillaceae</taxon>
        <taxon>Shouchella</taxon>
    </lineage>
</organism>
<reference key="1">
    <citation type="submission" date="2003-10" db="EMBL/GenBank/DDBJ databases">
        <title>The complete genome sequence of the alkaliphilic Bacillus clausii KSM-K16.</title>
        <authorList>
            <person name="Takaki Y."/>
            <person name="Kageyama Y."/>
            <person name="Shimamura S."/>
            <person name="Suzuki H."/>
            <person name="Nishi S."/>
            <person name="Hatada Y."/>
            <person name="Kawai S."/>
            <person name="Ito S."/>
            <person name="Horikoshi K."/>
        </authorList>
    </citation>
    <scope>NUCLEOTIDE SEQUENCE [LARGE SCALE GENOMIC DNA]</scope>
    <source>
        <strain>KSM-K16</strain>
    </source>
</reference>
<comment type="function">
    <text evidence="1">Promotes RNA polymerase assembly. Latches the N- and C-terminal regions of the beta' subunit thereby facilitating its interaction with the beta and alpha subunits.</text>
</comment>
<comment type="catalytic activity">
    <reaction evidence="1">
        <text>RNA(n) + a ribonucleoside 5'-triphosphate = RNA(n+1) + diphosphate</text>
        <dbReference type="Rhea" id="RHEA:21248"/>
        <dbReference type="Rhea" id="RHEA-COMP:14527"/>
        <dbReference type="Rhea" id="RHEA-COMP:17342"/>
        <dbReference type="ChEBI" id="CHEBI:33019"/>
        <dbReference type="ChEBI" id="CHEBI:61557"/>
        <dbReference type="ChEBI" id="CHEBI:140395"/>
        <dbReference type="EC" id="2.7.7.6"/>
    </reaction>
</comment>
<comment type="subunit">
    <text evidence="1">The RNAP catalytic core consists of 2 alpha, 1 beta, 1 beta' and 1 omega subunit. When a sigma factor is associated with the core the holoenzyme is formed, which can initiate transcription.</text>
</comment>
<comment type="similarity">
    <text evidence="1">Belongs to the RNA polymerase subunit omega family.</text>
</comment>
<keyword id="KW-0240">DNA-directed RNA polymerase</keyword>
<keyword id="KW-0548">Nucleotidyltransferase</keyword>
<keyword id="KW-1185">Reference proteome</keyword>
<keyword id="KW-0804">Transcription</keyword>
<keyword id="KW-0808">Transferase</keyword>
<feature type="chain" id="PRO_0000237432" description="DNA-directed RNA polymerase subunit omega">
    <location>
        <begin position="1"/>
        <end position="70"/>
    </location>
</feature>
<name>RPOZ_SHOC1</name>
<proteinExistence type="inferred from homology"/>
<sequence>MLYPSIDNLLEKLDSKYSLVTVSARRAREMKEDSARVPLVEKPKSYKFVGIALEEIVNDQLTKRVPKEEQ</sequence>
<accession>Q5WFK4</accession>
<protein>
    <recommendedName>
        <fullName evidence="1">DNA-directed RNA polymerase subunit omega</fullName>
        <shortName evidence="1">RNAP omega subunit</shortName>
        <ecNumber evidence="1">2.7.7.6</ecNumber>
    </recommendedName>
    <alternativeName>
        <fullName evidence="1">RNA polymerase omega subunit</fullName>
    </alternativeName>
    <alternativeName>
        <fullName evidence="1">Transcriptase subunit omega</fullName>
    </alternativeName>
</protein>
<dbReference type="EC" id="2.7.7.6" evidence="1"/>
<dbReference type="EMBL" id="AP006627">
    <property type="protein sequence ID" value="BAD64856.1"/>
    <property type="molecule type" value="Genomic_DNA"/>
</dbReference>
<dbReference type="RefSeq" id="WP_011247164.1">
    <property type="nucleotide sequence ID" value="NC_006582.1"/>
</dbReference>
<dbReference type="SMR" id="Q5WFK4"/>
<dbReference type="STRING" id="66692.ABC2321"/>
<dbReference type="KEGG" id="bcl:ABC2321"/>
<dbReference type="eggNOG" id="COG1758">
    <property type="taxonomic scope" value="Bacteria"/>
</dbReference>
<dbReference type="HOGENOM" id="CLU_125406_6_0_9"/>
<dbReference type="OrthoDB" id="9815459at2"/>
<dbReference type="Proteomes" id="UP000001168">
    <property type="component" value="Chromosome"/>
</dbReference>
<dbReference type="GO" id="GO:0000428">
    <property type="term" value="C:DNA-directed RNA polymerase complex"/>
    <property type="evidence" value="ECO:0007669"/>
    <property type="project" value="UniProtKB-KW"/>
</dbReference>
<dbReference type="GO" id="GO:0003677">
    <property type="term" value="F:DNA binding"/>
    <property type="evidence" value="ECO:0007669"/>
    <property type="project" value="UniProtKB-UniRule"/>
</dbReference>
<dbReference type="GO" id="GO:0003899">
    <property type="term" value="F:DNA-directed RNA polymerase activity"/>
    <property type="evidence" value="ECO:0007669"/>
    <property type="project" value="UniProtKB-UniRule"/>
</dbReference>
<dbReference type="GO" id="GO:0006351">
    <property type="term" value="P:DNA-templated transcription"/>
    <property type="evidence" value="ECO:0007669"/>
    <property type="project" value="UniProtKB-UniRule"/>
</dbReference>
<dbReference type="Gene3D" id="3.90.940.10">
    <property type="match status" value="1"/>
</dbReference>
<dbReference type="HAMAP" id="MF_00366">
    <property type="entry name" value="RNApol_bact_RpoZ"/>
    <property type="match status" value="1"/>
</dbReference>
<dbReference type="InterPro" id="IPR003716">
    <property type="entry name" value="DNA-dir_RNA_pol_omega"/>
</dbReference>
<dbReference type="InterPro" id="IPR006110">
    <property type="entry name" value="Pol_omega/Rpo6/RPB6"/>
</dbReference>
<dbReference type="InterPro" id="IPR036161">
    <property type="entry name" value="RPB6/omega-like_sf"/>
</dbReference>
<dbReference type="NCBIfam" id="TIGR00690">
    <property type="entry name" value="rpoZ"/>
    <property type="match status" value="1"/>
</dbReference>
<dbReference type="PANTHER" id="PTHR34476">
    <property type="entry name" value="DNA-DIRECTED RNA POLYMERASE SUBUNIT OMEGA"/>
    <property type="match status" value="1"/>
</dbReference>
<dbReference type="PANTHER" id="PTHR34476:SF1">
    <property type="entry name" value="DNA-DIRECTED RNA POLYMERASE SUBUNIT OMEGA"/>
    <property type="match status" value="1"/>
</dbReference>
<dbReference type="Pfam" id="PF01192">
    <property type="entry name" value="RNA_pol_Rpb6"/>
    <property type="match status" value="1"/>
</dbReference>
<dbReference type="SMART" id="SM01409">
    <property type="entry name" value="RNA_pol_Rpb6"/>
    <property type="match status" value="1"/>
</dbReference>
<dbReference type="SUPFAM" id="SSF63562">
    <property type="entry name" value="RPB6/omega subunit-like"/>
    <property type="match status" value="1"/>
</dbReference>
<evidence type="ECO:0000255" key="1">
    <source>
        <dbReference type="HAMAP-Rule" id="MF_00366"/>
    </source>
</evidence>